<proteinExistence type="evidence at protein level"/>
<keyword id="KW-1185">Reference proteome</keyword>
<name>MERB1_MOUSE</name>
<dbReference type="EMBL" id="AK035868">
    <property type="protein sequence ID" value="BAC29221.1"/>
    <property type="molecule type" value="mRNA"/>
</dbReference>
<dbReference type="EMBL" id="AK076136">
    <property type="protein sequence ID" value="BAC36211.1"/>
    <property type="molecule type" value="mRNA"/>
</dbReference>
<dbReference type="EMBL" id="AK136859">
    <property type="protein sequence ID" value="BAE23149.1"/>
    <property type="molecule type" value="mRNA"/>
</dbReference>
<dbReference type="EMBL" id="BC022741">
    <property type="protein sequence ID" value="AAH22741.1"/>
    <property type="molecule type" value="mRNA"/>
</dbReference>
<dbReference type="CCDS" id="CCDS27971.1"/>
<dbReference type="RefSeq" id="NP_653101.1">
    <property type="nucleotide sequence ID" value="NM_144518.3"/>
</dbReference>
<dbReference type="RefSeq" id="XP_036015989.1">
    <property type="nucleotide sequence ID" value="XM_036160096.1"/>
</dbReference>
<dbReference type="SMR" id="Q8R1Y2"/>
<dbReference type="FunCoup" id="Q8R1Y2">
    <property type="interactions" value="104"/>
</dbReference>
<dbReference type="STRING" id="10090.ENSMUSP00000062758"/>
<dbReference type="iPTMnet" id="Q8R1Y2"/>
<dbReference type="PhosphoSitePlus" id="Q8R1Y2"/>
<dbReference type="PaxDb" id="10090-ENSMUSP00000062758"/>
<dbReference type="Antibodypedia" id="51073">
    <property type="antibodies" value="71 antibodies from 19 providers"/>
</dbReference>
<dbReference type="DNASU" id="67254"/>
<dbReference type="Ensembl" id="ENSMUST00000056521.12">
    <property type="protein sequence ID" value="ENSMUSP00000062758.6"/>
    <property type="gene ID" value="ENSMUSG00000044117.13"/>
</dbReference>
<dbReference type="GeneID" id="67254"/>
<dbReference type="KEGG" id="mmu:67254"/>
<dbReference type="UCSC" id="uc007ygu.1">
    <property type="organism name" value="mouse"/>
</dbReference>
<dbReference type="AGR" id="MGI:1914504"/>
<dbReference type="CTD" id="89927"/>
<dbReference type="MGI" id="MGI:1914504">
    <property type="gene designation" value="Bmerb1"/>
</dbReference>
<dbReference type="VEuPathDB" id="HostDB:ENSMUSG00000044117"/>
<dbReference type="eggNOG" id="ENOG502RC9C">
    <property type="taxonomic scope" value="Eukaryota"/>
</dbReference>
<dbReference type="GeneTree" id="ENSGT00440000038745"/>
<dbReference type="HOGENOM" id="CLU_123952_0_0_1"/>
<dbReference type="InParanoid" id="Q8R1Y2"/>
<dbReference type="OMA" id="ATQCSIM"/>
<dbReference type="OrthoDB" id="10048027at2759"/>
<dbReference type="PhylomeDB" id="Q8R1Y2"/>
<dbReference type="TreeFam" id="TF331543"/>
<dbReference type="BioGRID-ORCS" id="67254">
    <property type="hits" value="2 hits in 77 CRISPR screens"/>
</dbReference>
<dbReference type="ChiTaRS" id="Bmerb1">
    <property type="organism name" value="mouse"/>
</dbReference>
<dbReference type="PRO" id="PR:Q8R1Y2"/>
<dbReference type="Proteomes" id="UP000000589">
    <property type="component" value="Chromosome 16"/>
</dbReference>
<dbReference type="RNAct" id="Q8R1Y2">
    <property type="molecule type" value="protein"/>
</dbReference>
<dbReference type="Bgee" id="ENSMUSG00000044117">
    <property type="expression patterns" value="Expressed in medial dorsal nucleus of thalamus and 147 other cell types or tissues"/>
</dbReference>
<dbReference type="ExpressionAtlas" id="Q8R1Y2">
    <property type="expression patterns" value="baseline and differential"/>
</dbReference>
<dbReference type="GO" id="GO:0015630">
    <property type="term" value="C:microtubule cytoskeleton"/>
    <property type="evidence" value="ECO:0000314"/>
    <property type="project" value="MGI"/>
</dbReference>
<dbReference type="GO" id="GO:0021814">
    <property type="term" value="P:cell motility involved in cerebral cortex radial glia guided migration"/>
    <property type="evidence" value="ECO:0000315"/>
    <property type="project" value="MGI"/>
</dbReference>
<dbReference type="GO" id="GO:0007019">
    <property type="term" value="P:microtubule depolymerization"/>
    <property type="evidence" value="ECO:0000315"/>
    <property type="project" value="MGI"/>
</dbReference>
<dbReference type="GO" id="GO:0021822">
    <property type="term" value="P:negative regulation of cell motility involved in cerebral cortex radial glia guided migration"/>
    <property type="evidence" value="ECO:0000315"/>
    <property type="project" value="MGI"/>
</dbReference>
<dbReference type="GO" id="GO:0007026">
    <property type="term" value="P:negative regulation of microtubule depolymerization"/>
    <property type="evidence" value="ECO:0000315"/>
    <property type="project" value="MGI"/>
</dbReference>
<dbReference type="InterPro" id="IPR022735">
    <property type="entry name" value="bMERB_dom"/>
</dbReference>
<dbReference type="InterPro" id="IPR040127">
    <property type="entry name" value="C16orf45-like"/>
</dbReference>
<dbReference type="PANTHER" id="PTHR22704:SF1">
    <property type="entry name" value="BMERB DOMAIN-CONTAINING PROTEIN 1"/>
    <property type="match status" value="1"/>
</dbReference>
<dbReference type="PANTHER" id="PTHR22704">
    <property type="entry name" value="BMERB DOMAIN-CONTAINING PROTEIN 1-RELATED"/>
    <property type="match status" value="1"/>
</dbReference>
<dbReference type="Pfam" id="PF12130">
    <property type="entry name" value="bMERB_dom"/>
    <property type="match status" value="1"/>
</dbReference>
<dbReference type="SMART" id="SM01203">
    <property type="entry name" value="DUF3585"/>
    <property type="match status" value="1"/>
</dbReference>
<dbReference type="PROSITE" id="PS51848">
    <property type="entry name" value="BMERB"/>
    <property type="match status" value="1"/>
</dbReference>
<reference key="1">
    <citation type="journal article" date="2005" name="Science">
        <title>The transcriptional landscape of the mammalian genome.</title>
        <authorList>
            <person name="Carninci P."/>
            <person name="Kasukawa T."/>
            <person name="Katayama S."/>
            <person name="Gough J."/>
            <person name="Frith M.C."/>
            <person name="Maeda N."/>
            <person name="Oyama R."/>
            <person name="Ravasi T."/>
            <person name="Lenhard B."/>
            <person name="Wells C."/>
            <person name="Kodzius R."/>
            <person name="Shimokawa K."/>
            <person name="Bajic V.B."/>
            <person name="Brenner S.E."/>
            <person name="Batalov S."/>
            <person name="Forrest A.R."/>
            <person name="Zavolan M."/>
            <person name="Davis M.J."/>
            <person name="Wilming L.G."/>
            <person name="Aidinis V."/>
            <person name="Allen J.E."/>
            <person name="Ambesi-Impiombato A."/>
            <person name="Apweiler R."/>
            <person name="Aturaliya R.N."/>
            <person name="Bailey T.L."/>
            <person name="Bansal M."/>
            <person name="Baxter L."/>
            <person name="Beisel K.W."/>
            <person name="Bersano T."/>
            <person name="Bono H."/>
            <person name="Chalk A.M."/>
            <person name="Chiu K.P."/>
            <person name="Choudhary V."/>
            <person name="Christoffels A."/>
            <person name="Clutterbuck D.R."/>
            <person name="Crowe M.L."/>
            <person name="Dalla E."/>
            <person name="Dalrymple B.P."/>
            <person name="de Bono B."/>
            <person name="Della Gatta G."/>
            <person name="di Bernardo D."/>
            <person name="Down T."/>
            <person name="Engstrom P."/>
            <person name="Fagiolini M."/>
            <person name="Faulkner G."/>
            <person name="Fletcher C.F."/>
            <person name="Fukushima T."/>
            <person name="Furuno M."/>
            <person name="Futaki S."/>
            <person name="Gariboldi M."/>
            <person name="Georgii-Hemming P."/>
            <person name="Gingeras T.R."/>
            <person name="Gojobori T."/>
            <person name="Green R.E."/>
            <person name="Gustincich S."/>
            <person name="Harbers M."/>
            <person name="Hayashi Y."/>
            <person name="Hensch T.K."/>
            <person name="Hirokawa N."/>
            <person name="Hill D."/>
            <person name="Huminiecki L."/>
            <person name="Iacono M."/>
            <person name="Ikeo K."/>
            <person name="Iwama A."/>
            <person name="Ishikawa T."/>
            <person name="Jakt M."/>
            <person name="Kanapin A."/>
            <person name="Katoh M."/>
            <person name="Kawasawa Y."/>
            <person name="Kelso J."/>
            <person name="Kitamura H."/>
            <person name="Kitano H."/>
            <person name="Kollias G."/>
            <person name="Krishnan S.P."/>
            <person name="Kruger A."/>
            <person name="Kummerfeld S.K."/>
            <person name="Kurochkin I.V."/>
            <person name="Lareau L.F."/>
            <person name="Lazarevic D."/>
            <person name="Lipovich L."/>
            <person name="Liu J."/>
            <person name="Liuni S."/>
            <person name="McWilliam S."/>
            <person name="Madan Babu M."/>
            <person name="Madera M."/>
            <person name="Marchionni L."/>
            <person name="Matsuda H."/>
            <person name="Matsuzawa S."/>
            <person name="Miki H."/>
            <person name="Mignone F."/>
            <person name="Miyake S."/>
            <person name="Morris K."/>
            <person name="Mottagui-Tabar S."/>
            <person name="Mulder N."/>
            <person name="Nakano N."/>
            <person name="Nakauchi H."/>
            <person name="Ng P."/>
            <person name="Nilsson R."/>
            <person name="Nishiguchi S."/>
            <person name="Nishikawa S."/>
            <person name="Nori F."/>
            <person name="Ohara O."/>
            <person name="Okazaki Y."/>
            <person name="Orlando V."/>
            <person name="Pang K.C."/>
            <person name="Pavan W.J."/>
            <person name="Pavesi G."/>
            <person name="Pesole G."/>
            <person name="Petrovsky N."/>
            <person name="Piazza S."/>
            <person name="Reed J."/>
            <person name="Reid J.F."/>
            <person name="Ring B.Z."/>
            <person name="Ringwald M."/>
            <person name="Rost B."/>
            <person name="Ruan Y."/>
            <person name="Salzberg S.L."/>
            <person name="Sandelin A."/>
            <person name="Schneider C."/>
            <person name="Schoenbach C."/>
            <person name="Sekiguchi K."/>
            <person name="Semple C.A."/>
            <person name="Seno S."/>
            <person name="Sessa L."/>
            <person name="Sheng Y."/>
            <person name="Shibata Y."/>
            <person name="Shimada H."/>
            <person name="Shimada K."/>
            <person name="Silva D."/>
            <person name="Sinclair B."/>
            <person name="Sperling S."/>
            <person name="Stupka E."/>
            <person name="Sugiura K."/>
            <person name="Sultana R."/>
            <person name="Takenaka Y."/>
            <person name="Taki K."/>
            <person name="Tammoja K."/>
            <person name="Tan S.L."/>
            <person name="Tang S."/>
            <person name="Taylor M.S."/>
            <person name="Tegner J."/>
            <person name="Teichmann S.A."/>
            <person name="Ueda H.R."/>
            <person name="van Nimwegen E."/>
            <person name="Verardo R."/>
            <person name="Wei C.L."/>
            <person name="Yagi K."/>
            <person name="Yamanishi H."/>
            <person name="Zabarovsky E."/>
            <person name="Zhu S."/>
            <person name="Zimmer A."/>
            <person name="Hide W."/>
            <person name="Bult C."/>
            <person name="Grimmond S.M."/>
            <person name="Teasdale R.D."/>
            <person name="Liu E.T."/>
            <person name="Brusic V."/>
            <person name="Quackenbush J."/>
            <person name="Wahlestedt C."/>
            <person name="Mattick J.S."/>
            <person name="Hume D.A."/>
            <person name="Kai C."/>
            <person name="Sasaki D."/>
            <person name="Tomaru Y."/>
            <person name="Fukuda S."/>
            <person name="Kanamori-Katayama M."/>
            <person name="Suzuki M."/>
            <person name="Aoki J."/>
            <person name="Arakawa T."/>
            <person name="Iida J."/>
            <person name="Imamura K."/>
            <person name="Itoh M."/>
            <person name="Kato T."/>
            <person name="Kawaji H."/>
            <person name="Kawagashira N."/>
            <person name="Kawashima T."/>
            <person name="Kojima M."/>
            <person name="Kondo S."/>
            <person name="Konno H."/>
            <person name="Nakano K."/>
            <person name="Ninomiya N."/>
            <person name="Nishio T."/>
            <person name="Okada M."/>
            <person name="Plessy C."/>
            <person name="Shibata K."/>
            <person name="Shiraki T."/>
            <person name="Suzuki S."/>
            <person name="Tagami M."/>
            <person name="Waki K."/>
            <person name="Watahiki A."/>
            <person name="Okamura-Oho Y."/>
            <person name="Suzuki H."/>
            <person name="Kawai J."/>
            <person name="Hayashizaki Y."/>
        </authorList>
    </citation>
    <scope>NUCLEOTIDE SEQUENCE [LARGE SCALE MRNA]</scope>
    <source>
        <strain>C57BL/6J</strain>
        <tissue>Cerebellum</tissue>
        <tissue>Diencephalon</tissue>
        <tissue>Hippocampus</tissue>
    </source>
</reference>
<reference key="2">
    <citation type="journal article" date="2004" name="Genome Res.">
        <title>The status, quality, and expansion of the NIH full-length cDNA project: the Mammalian Gene Collection (MGC).</title>
        <authorList>
            <consortium name="The MGC Project Team"/>
        </authorList>
    </citation>
    <scope>NUCLEOTIDE SEQUENCE [LARGE SCALE MRNA]</scope>
    <source>
        <tissue>Eye</tissue>
    </source>
</reference>
<reference key="3">
    <citation type="journal article" date="2010" name="Cell">
        <title>A tissue-specific atlas of mouse protein phosphorylation and expression.</title>
        <authorList>
            <person name="Huttlin E.L."/>
            <person name="Jedrychowski M.P."/>
            <person name="Elias J.E."/>
            <person name="Goswami T."/>
            <person name="Rad R."/>
            <person name="Beausoleil S.A."/>
            <person name="Villen J."/>
            <person name="Haas W."/>
            <person name="Sowa M.E."/>
            <person name="Gygi S.P."/>
        </authorList>
    </citation>
    <scope>IDENTIFICATION BY MASS SPECTROMETRY [LARGE SCALE ANALYSIS]</scope>
    <source>
        <tissue>Brain</tissue>
    </source>
</reference>
<protein>
    <recommendedName>
        <fullName evidence="3">bMERB domain-containing protein 1</fullName>
    </recommendedName>
    <alternativeName>
        <fullName>Uncharacterized protein C16orf45 homolog</fullName>
    </alternativeName>
</protein>
<organism>
    <name type="scientific">Mus musculus</name>
    <name type="common">Mouse</name>
    <dbReference type="NCBI Taxonomy" id="10090"/>
    <lineage>
        <taxon>Eukaryota</taxon>
        <taxon>Metazoa</taxon>
        <taxon>Chordata</taxon>
        <taxon>Craniata</taxon>
        <taxon>Vertebrata</taxon>
        <taxon>Euteleostomi</taxon>
        <taxon>Mammalia</taxon>
        <taxon>Eutheria</taxon>
        <taxon>Euarchontoglires</taxon>
        <taxon>Glires</taxon>
        <taxon>Rodentia</taxon>
        <taxon>Myomorpha</taxon>
        <taxon>Muroidea</taxon>
        <taxon>Muridae</taxon>
        <taxon>Murinae</taxon>
        <taxon>Mus</taxon>
        <taxon>Mus</taxon>
    </lineage>
</organism>
<accession>Q8R1Y2</accession>
<accession>Q3UVX0</accession>
<feature type="chain" id="PRO_0000079282" description="bMERB domain-containing protein 1">
    <location>
        <begin position="1"/>
        <end position="203"/>
    </location>
</feature>
<feature type="domain" description="bMERB" evidence="1">
    <location>
        <begin position="3"/>
        <end position="149"/>
    </location>
</feature>
<feature type="region of interest" description="Disordered" evidence="2">
    <location>
        <begin position="161"/>
        <end position="184"/>
    </location>
</feature>
<gene>
    <name type="primary">Bmerb1</name>
</gene>
<sequence length="203" mass="23465">MELKQSLSVHLEAEKPLRRYGAVEETAWKAEGLGSQLDIISMAETSMMPEEIELEMAKIQRLREVLVRRESELRFMMDDIQLCKDIMDLKQELQNLVAIPEKEKTKLQKQREDELIQKIHRLVQKRDFLVDDAEVERLREQEEDKEMADFLRIKLKPLDKVTKTSASSRAEKKAEPPPSKPTVAKTGLALIKDCCGTTQCNIM</sequence>
<evidence type="ECO:0000255" key="1">
    <source>
        <dbReference type="PROSITE-ProRule" id="PRU01195"/>
    </source>
</evidence>
<evidence type="ECO:0000256" key="2">
    <source>
        <dbReference type="SAM" id="MobiDB-lite"/>
    </source>
</evidence>
<evidence type="ECO:0000305" key="3"/>